<sequence length="943" mass="107222">MGDSDDEYDRKRRDKFRGERESYRTERRDDRRPVGGSAGARDEWAERNPFRGGASAGGGGARHRPDYSDYRGPGARPRYGSPVRDLPPAKRMRPDWGDGDVRANPRFGGYDPYLMQAWNDHYQSMHSAYSHGGHAPPVRESIGGGGGDTLTQPAMLNLKQFLDTQDENISDSEVMRKYTEYKTDFKRQQLNEFFVAHKDEEWFKNKYHPEDSVKRSEEQRGFLQRRTDVFMELLENGTIGSVKVDSSQADALIRVLDTCVIKLEGGTDEDLKVLDEKPKDPVVYERKAEQMQSVKEVEKTINSPKEEMSEADPVSTQRKPVRPVNSDGENWDDDDAENSAPKKELAEDSKDSDSKPEDKQLNKKKTKKRKRNSSDDDSSSSESSSSSDEEKLKEKYDVEDGLRAEQKTEAEKDRQEATKAKQGPQSPKLDEDEGNENTEPKGLDSKINTYEEIDNTLKSPEISSNPIKNTDNGDGSKVEEDGEKPSVGKDKVVETETIDLDKVKDGQPRALHRTSSIFLRNLAPSITRSEIEAVCNRFSGYLRVAIADPLVERRWYRRGWITFMRDVNIKEICWGLNNQRLRDCEMGAIVNRDLSRRVRPANGITAHKQVVRSDIKLCAKIALNLDEKFRLWAEGPKDDSNSARANESSENGSGSTYGFNSQNPVLQNITDYLIEEASAEEEELLGLTGENKDTEGEPIERDEQLISVLDRLVLYLRIVHSVDYYNHCEYPYEDEMPNRCGIIHARGPPPVRVTNNDVQEYIKIYESKLQQFLTKTVPLSDEEIKNLGAKDAETEVEKFVQANTQELAKDKWLCPLSGKKFKGPEFIRKHIFNKHEEKVDEVRKEVQYFNNYLRDPKRPQLPEHPGTSKRPESESARGGGGGYRPPMYPPFSAMPYGFGPPMMGGGRGGRNFPPARRELPLEHQRRLIGYHDLDAPANSDMFD</sequence>
<keyword id="KW-0539">Nucleus</keyword>
<keyword id="KW-0597">Phosphoprotein</keyword>
<keyword id="KW-1185">Reference proteome</keyword>
<keyword id="KW-0943">RNA-mediated gene silencing</keyword>
<name>SRRT_DROME</name>
<evidence type="ECO:0000250" key="1"/>
<evidence type="ECO:0000256" key="2">
    <source>
        <dbReference type="SAM" id="MobiDB-lite"/>
    </source>
</evidence>
<evidence type="ECO:0000269" key="3">
    <source>
    </source>
</evidence>
<evidence type="ECO:0000269" key="4">
    <source>
    </source>
</evidence>
<evidence type="ECO:0000269" key="5">
    <source>
    </source>
</evidence>
<evidence type="ECO:0000305" key="6"/>
<reference key="1">
    <citation type="journal article" date="2000" name="Science">
        <title>The genome sequence of Drosophila melanogaster.</title>
        <authorList>
            <person name="Adams M.D."/>
            <person name="Celniker S.E."/>
            <person name="Holt R.A."/>
            <person name="Evans C.A."/>
            <person name="Gocayne J.D."/>
            <person name="Amanatides P.G."/>
            <person name="Scherer S.E."/>
            <person name="Li P.W."/>
            <person name="Hoskins R.A."/>
            <person name="Galle R.F."/>
            <person name="George R.A."/>
            <person name="Lewis S.E."/>
            <person name="Richards S."/>
            <person name="Ashburner M."/>
            <person name="Henderson S.N."/>
            <person name="Sutton G.G."/>
            <person name="Wortman J.R."/>
            <person name="Yandell M.D."/>
            <person name="Zhang Q."/>
            <person name="Chen L.X."/>
            <person name="Brandon R.C."/>
            <person name="Rogers Y.-H.C."/>
            <person name="Blazej R.G."/>
            <person name="Champe M."/>
            <person name="Pfeiffer B.D."/>
            <person name="Wan K.H."/>
            <person name="Doyle C."/>
            <person name="Baxter E.G."/>
            <person name="Helt G."/>
            <person name="Nelson C.R."/>
            <person name="Miklos G.L.G."/>
            <person name="Abril J.F."/>
            <person name="Agbayani A."/>
            <person name="An H.-J."/>
            <person name="Andrews-Pfannkoch C."/>
            <person name="Baldwin D."/>
            <person name="Ballew R.M."/>
            <person name="Basu A."/>
            <person name="Baxendale J."/>
            <person name="Bayraktaroglu L."/>
            <person name="Beasley E.M."/>
            <person name="Beeson K.Y."/>
            <person name="Benos P.V."/>
            <person name="Berman B.P."/>
            <person name="Bhandari D."/>
            <person name="Bolshakov S."/>
            <person name="Borkova D."/>
            <person name="Botchan M.R."/>
            <person name="Bouck J."/>
            <person name="Brokstein P."/>
            <person name="Brottier P."/>
            <person name="Burtis K.C."/>
            <person name="Busam D.A."/>
            <person name="Butler H."/>
            <person name="Cadieu E."/>
            <person name="Center A."/>
            <person name="Chandra I."/>
            <person name="Cherry J.M."/>
            <person name="Cawley S."/>
            <person name="Dahlke C."/>
            <person name="Davenport L.B."/>
            <person name="Davies P."/>
            <person name="de Pablos B."/>
            <person name="Delcher A."/>
            <person name="Deng Z."/>
            <person name="Mays A.D."/>
            <person name="Dew I."/>
            <person name="Dietz S.M."/>
            <person name="Dodson K."/>
            <person name="Doup L.E."/>
            <person name="Downes M."/>
            <person name="Dugan-Rocha S."/>
            <person name="Dunkov B.C."/>
            <person name="Dunn P."/>
            <person name="Durbin K.J."/>
            <person name="Evangelista C.C."/>
            <person name="Ferraz C."/>
            <person name="Ferriera S."/>
            <person name="Fleischmann W."/>
            <person name="Fosler C."/>
            <person name="Gabrielian A.E."/>
            <person name="Garg N.S."/>
            <person name="Gelbart W.M."/>
            <person name="Glasser K."/>
            <person name="Glodek A."/>
            <person name="Gong F."/>
            <person name="Gorrell J.H."/>
            <person name="Gu Z."/>
            <person name="Guan P."/>
            <person name="Harris M."/>
            <person name="Harris N.L."/>
            <person name="Harvey D.A."/>
            <person name="Heiman T.J."/>
            <person name="Hernandez J.R."/>
            <person name="Houck J."/>
            <person name="Hostin D."/>
            <person name="Houston K.A."/>
            <person name="Howland T.J."/>
            <person name="Wei M.-H."/>
            <person name="Ibegwam C."/>
            <person name="Jalali M."/>
            <person name="Kalush F."/>
            <person name="Karpen G.H."/>
            <person name="Ke Z."/>
            <person name="Kennison J.A."/>
            <person name="Ketchum K.A."/>
            <person name="Kimmel B.E."/>
            <person name="Kodira C.D."/>
            <person name="Kraft C.L."/>
            <person name="Kravitz S."/>
            <person name="Kulp D."/>
            <person name="Lai Z."/>
            <person name="Lasko P."/>
            <person name="Lei Y."/>
            <person name="Levitsky A.A."/>
            <person name="Li J.H."/>
            <person name="Li Z."/>
            <person name="Liang Y."/>
            <person name="Lin X."/>
            <person name="Liu X."/>
            <person name="Mattei B."/>
            <person name="McIntosh T.C."/>
            <person name="McLeod M.P."/>
            <person name="McPherson D."/>
            <person name="Merkulov G."/>
            <person name="Milshina N.V."/>
            <person name="Mobarry C."/>
            <person name="Morris J."/>
            <person name="Moshrefi A."/>
            <person name="Mount S.M."/>
            <person name="Moy M."/>
            <person name="Murphy B."/>
            <person name="Murphy L."/>
            <person name="Muzny D.M."/>
            <person name="Nelson D.L."/>
            <person name="Nelson D.R."/>
            <person name="Nelson K.A."/>
            <person name="Nixon K."/>
            <person name="Nusskern D.R."/>
            <person name="Pacleb J.M."/>
            <person name="Palazzolo M."/>
            <person name="Pittman G.S."/>
            <person name="Pan S."/>
            <person name="Pollard J."/>
            <person name="Puri V."/>
            <person name="Reese M.G."/>
            <person name="Reinert K."/>
            <person name="Remington K."/>
            <person name="Saunders R.D.C."/>
            <person name="Scheeler F."/>
            <person name="Shen H."/>
            <person name="Shue B.C."/>
            <person name="Siden-Kiamos I."/>
            <person name="Simpson M."/>
            <person name="Skupski M.P."/>
            <person name="Smith T.J."/>
            <person name="Spier E."/>
            <person name="Spradling A.C."/>
            <person name="Stapleton M."/>
            <person name="Strong R."/>
            <person name="Sun E."/>
            <person name="Svirskas R."/>
            <person name="Tector C."/>
            <person name="Turner R."/>
            <person name="Venter E."/>
            <person name="Wang A.H."/>
            <person name="Wang X."/>
            <person name="Wang Z.-Y."/>
            <person name="Wassarman D.A."/>
            <person name="Weinstock G.M."/>
            <person name="Weissenbach J."/>
            <person name="Williams S.M."/>
            <person name="Woodage T."/>
            <person name="Worley K.C."/>
            <person name="Wu D."/>
            <person name="Yang S."/>
            <person name="Yao Q.A."/>
            <person name="Ye J."/>
            <person name="Yeh R.-F."/>
            <person name="Zaveri J.S."/>
            <person name="Zhan M."/>
            <person name="Zhang G."/>
            <person name="Zhao Q."/>
            <person name="Zheng L."/>
            <person name="Zheng X.H."/>
            <person name="Zhong F.N."/>
            <person name="Zhong W."/>
            <person name="Zhou X."/>
            <person name="Zhu S.C."/>
            <person name="Zhu X."/>
            <person name="Smith H.O."/>
            <person name="Gibbs R.A."/>
            <person name="Myers E.W."/>
            <person name="Rubin G.M."/>
            <person name="Venter J.C."/>
        </authorList>
    </citation>
    <scope>NUCLEOTIDE SEQUENCE [LARGE SCALE GENOMIC DNA]</scope>
    <source>
        <strain>Berkeley</strain>
    </source>
</reference>
<reference key="2">
    <citation type="journal article" date="2002" name="Genome Biol.">
        <title>Annotation of the Drosophila melanogaster euchromatic genome: a systematic review.</title>
        <authorList>
            <person name="Misra S."/>
            <person name="Crosby M.A."/>
            <person name="Mungall C.J."/>
            <person name="Matthews B.B."/>
            <person name="Campbell K.S."/>
            <person name="Hradecky P."/>
            <person name="Huang Y."/>
            <person name="Kaminker J.S."/>
            <person name="Millburn G.H."/>
            <person name="Prochnik S.E."/>
            <person name="Smith C.D."/>
            <person name="Tupy J.L."/>
            <person name="Whitfield E.J."/>
            <person name="Bayraktaroglu L."/>
            <person name="Berman B.P."/>
            <person name="Bettencourt B.R."/>
            <person name="Celniker S.E."/>
            <person name="de Grey A.D.N.J."/>
            <person name="Drysdale R.A."/>
            <person name="Harris N.L."/>
            <person name="Richter J."/>
            <person name="Russo S."/>
            <person name="Schroeder A.J."/>
            <person name="Shu S.Q."/>
            <person name="Stapleton M."/>
            <person name="Yamada C."/>
            <person name="Ashburner M."/>
            <person name="Gelbart W.M."/>
            <person name="Rubin G.M."/>
            <person name="Lewis S.E."/>
        </authorList>
    </citation>
    <scope>GENOME REANNOTATION</scope>
    <source>
        <strain>Berkeley</strain>
    </source>
</reference>
<reference key="3">
    <citation type="journal article" date="2002" name="Genome Biol.">
        <title>A Drosophila full-length cDNA resource.</title>
        <authorList>
            <person name="Stapleton M."/>
            <person name="Carlson J.W."/>
            <person name="Brokstein P."/>
            <person name="Yu C."/>
            <person name="Champe M."/>
            <person name="George R.A."/>
            <person name="Guarin H."/>
            <person name="Kronmiller B."/>
            <person name="Pacleb J.M."/>
            <person name="Park S."/>
            <person name="Wan K.H."/>
            <person name="Rubin G.M."/>
            <person name="Celniker S.E."/>
        </authorList>
    </citation>
    <scope>NUCLEOTIDE SEQUENCE [LARGE SCALE MRNA]</scope>
    <source>
        <strain>Berkeley</strain>
        <tissue>Embryo</tissue>
        <tissue>Larva</tissue>
        <tissue>Pupae</tissue>
    </source>
</reference>
<reference key="4">
    <citation type="submission" date="2004-01" db="EMBL/GenBank/DDBJ databases">
        <authorList>
            <person name="Stapleton M."/>
            <person name="Carlson J.W."/>
            <person name="Chavez C."/>
            <person name="Frise E."/>
            <person name="George R.A."/>
            <person name="Pacleb J.M."/>
            <person name="Park S."/>
            <person name="Wan K.H."/>
            <person name="Yu C."/>
            <person name="Rubin G.M."/>
            <person name="Celniker S.E."/>
        </authorList>
    </citation>
    <scope>NUCLEOTIDE SEQUENCE [LARGE SCALE MRNA]</scope>
    <source>
        <strain>Berkeley</strain>
        <tissue>Embryo</tissue>
    </source>
</reference>
<reference key="5">
    <citation type="journal article" date="2007" name="Mol. Biosyst.">
        <title>An integrated chemical, mass spectrometric and computational strategy for (quantitative) phosphoproteomics: application to Drosophila melanogaster Kc167 cells.</title>
        <authorList>
            <person name="Bodenmiller B."/>
            <person name="Mueller L.N."/>
            <person name="Pedrioli P.G.A."/>
            <person name="Pflieger D."/>
            <person name="Juenger M.A."/>
            <person name="Eng J.K."/>
            <person name="Aebersold R."/>
            <person name="Tao W.A."/>
        </authorList>
    </citation>
    <scope>PHOSPHORYLATION [LARGE SCALE ANALYSIS] AT SER-326 AND SER-426</scope>
    <scope>IDENTIFICATION BY MASS SPECTROMETRY</scope>
</reference>
<reference key="6">
    <citation type="journal article" date="2008" name="J. Proteome Res.">
        <title>Phosphoproteome analysis of Drosophila melanogaster embryos.</title>
        <authorList>
            <person name="Zhai B."/>
            <person name="Villen J."/>
            <person name="Beausoleil S.A."/>
            <person name="Mintseris J."/>
            <person name="Gygi S.P."/>
        </authorList>
    </citation>
    <scope>PHOSPHORYLATION [LARGE SCALE ANALYSIS] AT TYR-79; SER-81; THR-300; SER-303; SER-309; SER-349; SER-352; SER-640 AND SER-642</scope>
    <scope>IDENTIFICATION BY MASS SPECTROMETRY</scope>
    <source>
        <tissue>Embryo</tissue>
    </source>
</reference>
<reference key="7">
    <citation type="journal article" date="2009" name="Cell">
        <title>Ars2 regulates both miRNA- and siRNA- dependent silencing and suppresses RNA virus infection in Drosophila.</title>
        <authorList>
            <person name="Sabin L.R."/>
            <person name="Zhou R."/>
            <person name="Gruber J.J."/>
            <person name="Lukinova N."/>
            <person name="Bambina S."/>
            <person name="Berman A."/>
            <person name="Lau C.-K."/>
            <person name="Thompson C.B."/>
            <person name="Cherry S."/>
        </authorList>
    </citation>
    <scope>FUNCTION</scope>
    <scope>INTERACTION WITH PASHA; CBP20 AND DCR-2</scope>
    <scope>DISRUPTION PHENOTYPE</scope>
</reference>
<organism>
    <name type="scientific">Drosophila melanogaster</name>
    <name type="common">Fruit fly</name>
    <dbReference type="NCBI Taxonomy" id="7227"/>
    <lineage>
        <taxon>Eukaryota</taxon>
        <taxon>Metazoa</taxon>
        <taxon>Ecdysozoa</taxon>
        <taxon>Arthropoda</taxon>
        <taxon>Hexapoda</taxon>
        <taxon>Insecta</taxon>
        <taxon>Pterygota</taxon>
        <taxon>Neoptera</taxon>
        <taxon>Endopterygota</taxon>
        <taxon>Diptera</taxon>
        <taxon>Brachycera</taxon>
        <taxon>Muscomorpha</taxon>
        <taxon>Ephydroidea</taxon>
        <taxon>Drosophilidae</taxon>
        <taxon>Drosophila</taxon>
        <taxon>Sophophora</taxon>
    </lineage>
</organism>
<feature type="chain" id="PRO_0000220968" description="Serrate RNA effector molecule homolog">
    <location>
        <begin position="1"/>
        <end position="943"/>
    </location>
</feature>
<feature type="region of interest" description="Disordered" evidence="2">
    <location>
        <begin position="1"/>
        <end position="100"/>
    </location>
</feature>
<feature type="region of interest" description="Disordered" evidence="2">
    <location>
        <begin position="284"/>
        <end position="493"/>
    </location>
</feature>
<feature type="region of interest" description="Disordered" evidence="2">
    <location>
        <begin position="637"/>
        <end position="662"/>
    </location>
</feature>
<feature type="region of interest" description="Disordered" evidence="2">
    <location>
        <begin position="851"/>
        <end position="886"/>
    </location>
</feature>
<feature type="compositionally biased region" description="Basic and acidic residues" evidence="2">
    <location>
        <begin position="8"/>
        <end position="33"/>
    </location>
</feature>
<feature type="compositionally biased region" description="Basic and acidic residues" evidence="2">
    <location>
        <begin position="40"/>
        <end position="49"/>
    </location>
</feature>
<feature type="compositionally biased region" description="Basic and acidic residues" evidence="2">
    <location>
        <begin position="284"/>
        <end position="308"/>
    </location>
</feature>
<feature type="compositionally biased region" description="Basic and acidic residues" evidence="2">
    <location>
        <begin position="340"/>
        <end position="361"/>
    </location>
</feature>
<feature type="compositionally biased region" description="Basic residues" evidence="2">
    <location>
        <begin position="362"/>
        <end position="371"/>
    </location>
</feature>
<feature type="compositionally biased region" description="Basic and acidic residues" evidence="2">
    <location>
        <begin position="388"/>
        <end position="419"/>
    </location>
</feature>
<feature type="compositionally biased region" description="Polar residues" evidence="2">
    <location>
        <begin position="456"/>
        <end position="473"/>
    </location>
</feature>
<feature type="compositionally biased region" description="Basic and acidic residues" evidence="2">
    <location>
        <begin position="474"/>
        <end position="493"/>
    </location>
</feature>
<feature type="compositionally biased region" description="Low complexity" evidence="2">
    <location>
        <begin position="642"/>
        <end position="653"/>
    </location>
</feature>
<feature type="modified residue" description="Phosphotyrosine" evidence="4">
    <location>
        <position position="79"/>
    </location>
</feature>
<feature type="modified residue" description="Phosphoserine" evidence="4">
    <location>
        <position position="81"/>
    </location>
</feature>
<feature type="modified residue" description="Phosphothreonine" evidence="4">
    <location>
        <position position="300"/>
    </location>
</feature>
<feature type="modified residue" description="Phosphoserine" evidence="4">
    <location>
        <position position="303"/>
    </location>
</feature>
<feature type="modified residue" description="Phosphoserine" evidence="4">
    <location>
        <position position="309"/>
    </location>
</feature>
<feature type="modified residue" description="Phosphoserine" evidence="3">
    <location>
        <position position="326"/>
    </location>
</feature>
<feature type="modified residue" description="Phosphoserine" evidence="4">
    <location>
        <position position="349"/>
    </location>
</feature>
<feature type="modified residue" description="Phosphoserine" evidence="4">
    <location>
        <position position="352"/>
    </location>
</feature>
<feature type="modified residue" description="Phosphoserine" evidence="3">
    <location>
        <position position="426"/>
    </location>
</feature>
<feature type="modified residue" description="Phosphoserine" evidence="4">
    <location>
        <position position="640"/>
    </location>
</feature>
<feature type="modified residue" description="Phosphoserine" evidence="4">
    <location>
        <position position="642"/>
    </location>
</feature>
<proteinExistence type="evidence at protein level"/>
<protein>
    <recommendedName>
        <fullName>Serrate RNA effector molecule homolog</fullName>
    </recommendedName>
    <alternativeName>
        <fullName>Arsenite-resistance protein 2 homolog</fullName>
    </alternativeName>
</protein>
<gene>
    <name type="primary">Ars2</name>
    <name type="ORF">CG7843</name>
</gene>
<accession>Q9V9K7</accession>
<accession>A4UZ50</accession>
<accession>Q53XG1</accession>
<accession>Q8SWW6</accession>
<accession>Q95TJ0</accession>
<dbReference type="EMBL" id="AE013599">
    <property type="protein sequence ID" value="AAF57281.2"/>
    <property type="molecule type" value="Genomic_DNA"/>
</dbReference>
<dbReference type="EMBL" id="AE013599">
    <property type="protein sequence ID" value="AAM68343.1"/>
    <property type="molecule type" value="Genomic_DNA"/>
</dbReference>
<dbReference type="EMBL" id="AE013599">
    <property type="protein sequence ID" value="AAM68344.1"/>
    <property type="molecule type" value="Genomic_DNA"/>
</dbReference>
<dbReference type="EMBL" id="AY058743">
    <property type="protein sequence ID" value="AAL13972.1"/>
    <property type="status" value="ALT_INIT"/>
    <property type="molecule type" value="mRNA"/>
</dbReference>
<dbReference type="EMBL" id="AY095037">
    <property type="protein sequence ID" value="AAM11365.1"/>
    <property type="status" value="ALT_SEQ"/>
    <property type="molecule type" value="mRNA"/>
</dbReference>
<dbReference type="EMBL" id="BT011368">
    <property type="protein sequence ID" value="AAR96160.1"/>
    <property type="molecule type" value="mRNA"/>
</dbReference>
<dbReference type="RefSeq" id="NP_610203.2">
    <property type="nucleotide sequence ID" value="NM_136359.3"/>
</dbReference>
<dbReference type="RefSeq" id="NP_724453.1">
    <property type="nucleotide sequence ID" value="NM_165458.2"/>
</dbReference>
<dbReference type="RefSeq" id="NP_724454.1">
    <property type="nucleotide sequence ID" value="NM_165459.2"/>
</dbReference>
<dbReference type="SMR" id="Q9V9K7"/>
<dbReference type="BioGRID" id="61443">
    <property type="interactions" value="16"/>
</dbReference>
<dbReference type="DIP" id="DIP-24057N"/>
<dbReference type="FunCoup" id="Q9V9K7">
    <property type="interactions" value="2473"/>
</dbReference>
<dbReference type="IntAct" id="Q9V9K7">
    <property type="interactions" value="61"/>
</dbReference>
<dbReference type="STRING" id="7227.FBpp0085356"/>
<dbReference type="iPTMnet" id="Q9V9K7"/>
<dbReference type="PaxDb" id="7227-FBpp0085354"/>
<dbReference type="DNASU" id="35539"/>
<dbReference type="EnsemblMetazoa" id="FBtr0086018">
    <property type="protein sequence ID" value="FBpp0085354"/>
    <property type="gene ID" value="FBgn0033062"/>
</dbReference>
<dbReference type="EnsemblMetazoa" id="FBtr0086020">
    <property type="protein sequence ID" value="FBpp0085356"/>
    <property type="gene ID" value="FBgn0033062"/>
</dbReference>
<dbReference type="EnsemblMetazoa" id="FBtr0086021">
    <property type="protein sequence ID" value="FBpp0085357"/>
    <property type="gene ID" value="FBgn0033062"/>
</dbReference>
<dbReference type="GeneID" id="35539"/>
<dbReference type="KEGG" id="dme:Dmel_CG7843"/>
<dbReference type="UCSC" id="CG7843-RA">
    <property type="organism name" value="d. melanogaster"/>
</dbReference>
<dbReference type="AGR" id="FB:FBgn0033062"/>
<dbReference type="CTD" id="35539"/>
<dbReference type="FlyBase" id="FBgn0033062">
    <property type="gene designation" value="Ars2"/>
</dbReference>
<dbReference type="VEuPathDB" id="VectorBase:FBgn0033062"/>
<dbReference type="eggNOG" id="KOG2295">
    <property type="taxonomic scope" value="Eukaryota"/>
</dbReference>
<dbReference type="GeneTree" id="ENSGT00390000005492"/>
<dbReference type="HOGENOM" id="CLU_008560_0_0_1"/>
<dbReference type="InParanoid" id="Q9V9K7"/>
<dbReference type="OMA" id="GARDEWS"/>
<dbReference type="OrthoDB" id="342064at2759"/>
<dbReference type="PhylomeDB" id="Q9V9K7"/>
<dbReference type="Reactome" id="R-DME-6807505">
    <property type="pathway name" value="RNA polymerase II transcribes snRNA genes"/>
</dbReference>
<dbReference type="Reactome" id="R-DME-72163">
    <property type="pathway name" value="mRNA Splicing - Major Pathway"/>
</dbReference>
<dbReference type="SignaLink" id="Q9V9K7"/>
<dbReference type="BioGRID-ORCS" id="35539">
    <property type="hits" value="1 hit in 1 CRISPR screen"/>
</dbReference>
<dbReference type="GenomeRNAi" id="35539"/>
<dbReference type="PRO" id="PR:Q9V9K7"/>
<dbReference type="Proteomes" id="UP000000803">
    <property type="component" value="Chromosome 2R"/>
</dbReference>
<dbReference type="Bgee" id="FBgn0033062">
    <property type="expression patterns" value="Expressed in male accessory gland secondary cell (Drosophila) in male reproductive gland and 273 other cell types or tissues"/>
</dbReference>
<dbReference type="ExpressionAtlas" id="Q9V9K7">
    <property type="expression patterns" value="baseline and differential"/>
</dbReference>
<dbReference type="GO" id="GO:0071013">
    <property type="term" value="C:catalytic step 2 spliceosome"/>
    <property type="evidence" value="ECO:0007005"/>
    <property type="project" value="FlyBase"/>
</dbReference>
<dbReference type="GO" id="GO:0016604">
    <property type="term" value="C:nuclear body"/>
    <property type="evidence" value="ECO:0000318"/>
    <property type="project" value="GO_Central"/>
</dbReference>
<dbReference type="GO" id="GO:0071011">
    <property type="term" value="C:precatalytic spliceosome"/>
    <property type="evidence" value="ECO:0007005"/>
    <property type="project" value="FlyBase"/>
</dbReference>
<dbReference type="GO" id="GO:0050829">
    <property type="term" value="P:defense response to Gram-negative bacterium"/>
    <property type="evidence" value="ECO:0000315"/>
    <property type="project" value="FlyBase"/>
</dbReference>
<dbReference type="GO" id="GO:0000398">
    <property type="term" value="P:mRNA splicing, via spliceosome"/>
    <property type="evidence" value="ECO:0000305"/>
    <property type="project" value="FlyBase"/>
</dbReference>
<dbReference type="GO" id="GO:0045071">
    <property type="term" value="P:negative regulation of viral genome replication"/>
    <property type="evidence" value="ECO:0000315"/>
    <property type="project" value="FlyBase"/>
</dbReference>
<dbReference type="GO" id="GO:0031053">
    <property type="term" value="P:primary miRNA processing"/>
    <property type="evidence" value="ECO:0000315"/>
    <property type="project" value="UniProtKB"/>
</dbReference>
<dbReference type="GO" id="GO:0035194">
    <property type="term" value="P:regulatory ncRNA-mediated post-transcriptional gene silencing"/>
    <property type="evidence" value="ECO:0000315"/>
    <property type="project" value="UniProtKB"/>
</dbReference>
<dbReference type="GO" id="GO:0030422">
    <property type="term" value="P:siRNA processing"/>
    <property type="evidence" value="ECO:0000315"/>
    <property type="project" value="FlyBase"/>
</dbReference>
<dbReference type="InterPro" id="IPR039727">
    <property type="entry name" value="SE/Ars2"/>
</dbReference>
<dbReference type="InterPro" id="IPR007042">
    <property type="entry name" value="SERRATE/Ars2_C"/>
</dbReference>
<dbReference type="InterPro" id="IPR021933">
    <property type="entry name" value="SERRATE/Ars2_N"/>
</dbReference>
<dbReference type="PANTHER" id="PTHR13165">
    <property type="entry name" value="ARSENITE-RESISTANCE PROTEIN 2"/>
    <property type="match status" value="1"/>
</dbReference>
<dbReference type="PANTHER" id="PTHR13165:SF0">
    <property type="entry name" value="SERRATE RNA EFFECTOR MOLECULE HOMOLOG"/>
    <property type="match status" value="1"/>
</dbReference>
<dbReference type="Pfam" id="PF04959">
    <property type="entry name" value="ARS2"/>
    <property type="match status" value="1"/>
</dbReference>
<dbReference type="Pfam" id="PF12066">
    <property type="entry name" value="SERRATE_Ars2_N"/>
    <property type="match status" value="1"/>
</dbReference>
<comment type="function">
    <text evidence="5">Acts as a mediator between the cap-binding complex (CBC) and RNA-mediated gene silencing (RNAi). Involved in innate immunity via the short interfering RNAs (siRNAs) processing machinery by restricting the viral RNA production. Also involved microRNA (miRNA)-mediated silencing by contributing to the stability and delivery of primary miRNA transcripts to the primary miRNA processing complex containing drosha and pasha.</text>
</comment>
<comment type="subunit">
    <text evidence="5">Interacts with cbp20, Dcr-2 and pasha.</text>
</comment>
<comment type="subcellular location">
    <subcellularLocation>
        <location evidence="1">Nucleus</location>
    </subcellularLocation>
</comment>
<comment type="disruption phenotype">
    <text evidence="5">Lethality.</text>
</comment>
<comment type="similarity">
    <text evidence="6">Belongs to the ARS2 family.</text>
</comment>
<comment type="sequence caution" evidence="6">
    <conflict type="erroneous initiation">
        <sequence resource="EMBL-CDS" id="AAL13972"/>
    </conflict>
</comment>
<comment type="sequence caution" evidence="6">
    <conflict type="frameshift">
        <sequence resource="EMBL-CDS" id="AAM11365"/>
    </conflict>
</comment>
<comment type="sequence caution" evidence="6">
    <conflict type="miscellaneous discrepancy">
        <sequence resource="EMBL-CDS" id="AAM11365"/>
    </conflict>
    <text>Contaminating sequence. Potential poly-A sequence.</text>
</comment>